<organism>
    <name type="scientific">Lactobacillus acidophilus (strain ATCC 700396 / NCK56 / N2 / NCFM)</name>
    <dbReference type="NCBI Taxonomy" id="272621"/>
    <lineage>
        <taxon>Bacteria</taxon>
        <taxon>Bacillati</taxon>
        <taxon>Bacillota</taxon>
        <taxon>Bacilli</taxon>
        <taxon>Lactobacillales</taxon>
        <taxon>Lactobacillaceae</taxon>
        <taxon>Lactobacillus</taxon>
    </lineage>
</organism>
<comment type="function">
    <text evidence="1">Excises uracil residues from the DNA which can arise as a result of misincorporation of dUMP residues by DNA polymerase or due to deamination of cytosine.</text>
</comment>
<comment type="catalytic activity">
    <reaction evidence="1">
        <text>Hydrolyzes single-stranded DNA or mismatched double-stranded DNA and polynucleotides, releasing free uracil.</text>
        <dbReference type="EC" id="3.2.2.27"/>
    </reaction>
</comment>
<comment type="subcellular location">
    <subcellularLocation>
        <location evidence="1">Cytoplasm</location>
    </subcellularLocation>
</comment>
<comment type="similarity">
    <text evidence="1">Belongs to the uracil-DNA glycosylase (UDG) superfamily. UNG family.</text>
</comment>
<name>UNG_LACAC</name>
<reference key="1">
    <citation type="journal article" date="2005" name="Proc. Natl. Acad. Sci. U.S.A.">
        <title>Complete genome sequence of the probiotic lactic acid bacterium Lactobacillus acidophilus NCFM.</title>
        <authorList>
            <person name="Altermann E."/>
            <person name="Russell W.M."/>
            <person name="Azcarate-Peril M.A."/>
            <person name="Barrangou R."/>
            <person name="Buck B.L."/>
            <person name="McAuliffe O."/>
            <person name="Souther N."/>
            <person name="Dobson A."/>
            <person name="Duong T."/>
            <person name="Callanan M."/>
            <person name="Lick S."/>
            <person name="Hamrick A."/>
            <person name="Cano R."/>
            <person name="Klaenhammer T.R."/>
        </authorList>
    </citation>
    <scope>NUCLEOTIDE SEQUENCE [LARGE SCALE GENOMIC DNA]</scope>
    <source>
        <strain>ATCC 700396 / NCK56 / N2 / NCFM</strain>
    </source>
</reference>
<gene>
    <name evidence="1" type="primary">ung</name>
    <name type="ordered locus">LBA0703</name>
</gene>
<feature type="chain" id="PRO_0000176105" description="Uracil-DNA glycosylase">
    <location>
        <begin position="1"/>
        <end position="232"/>
    </location>
</feature>
<feature type="active site" description="Proton acceptor" evidence="1">
    <location>
        <position position="66"/>
    </location>
</feature>
<protein>
    <recommendedName>
        <fullName evidence="1">Uracil-DNA glycosylase</fullName>
        <shortName evidence="1">UDG</shortName>
        <ecNumber evidence="1">3.2.2.27</ecNumber>
    </recommendedName>
</protein>
<proteinExistence type="inferred from homology"/>
<dbReference type="EC" id="3.2.2.27" evidence="1"/>
<dbReference type="EMBL" id="CP000033">
    <property type="protein sequence ID" value="AAV42578.1"/>
    <property type="molecule type" value="Genomic_DNA"/>
</dbReference>
<dbReference type="RefSeq" id="WP_003546612.1">
    <property type="nucleotide sequence ID" value="NC_006814.3"/>
</dbReference>
<dbReference type="RefSeq" id="YP_193609.1">
    <property type="nucleotide sequence ID" value="NC_006814.3"/>
</dbReference>
<dbReference type="SMR" id="Q5FL46"/>
<dbReference type="STRING" id="272621.LBA0703"/>
<dbReference type="KEGG" id="lac:LBA0703"/>
<dbReference type="PATRIC" id="fig|272621.13.peg.673"/>
<dbReference type="eggNOG" id="COG0692">
    <property type="taxonomic scope" value="Bacteria"/>
</dbReference>
<dbReference type="HOGENOM" id="CLU_032162_3_0_9"/>
<dbReference type="OrthoDB" id="9804372at2"/>
<dbReference type="BioCyc" id="LACI272621:G1G49-725-MONOMER"/>
<dbReference type="Proteomes" id="UP000006381">
    <property type="component" value="Chromosome"/>
</dbReference>
<dbReference type="GO" id="GO:0005737">
    <property type="term" value="C:cytoplasm"/>
    <property type="evidence" value="ECO:0007669"/>
    <property type="project" value="UniProtKB-SubCell"/>
</dbReference>
<dbReference type="GO" id="GO:0004844">
    <property type="term" value="F:uracil DNA N-glycosylase activity"/>
    <property type="evidence" value="ECO:0007669"/>
    <property type="project" value="UniProtKB-UniRule"/>
</dbReference>
<dbReference type="GO" id="GO:0097510">
    <property type="term" value="P:base-excision repair, AP site formation via deaminated base removal"/>
    <property type="evidence" value="ECO:0007669"/>
    <property type="project" value="TreeGrafter"/>
</dbReference>
<dbReference type="CDD" id="cd10027">
    <property type="entry name" value="UDG-F1-like"/>
    <property type="match status" value="1"/>
</dbReference>
<dbReference type="FunFam" id="3.40.470.10:FF:000001">
    <property type="entry name" value="Uracil-DNA glycosylase"/>
    <property type="match status" value="1"/>
</dbReference>
<dbReference type="Gene3D" id="3.40.470.10">
    <property type="entry name" value="Uracil-DNA glycosylase-like domain"/>
    <property type="match status" value="1"/>
</dbReference>
<dbReference type="HAMAP" id="MF_00148">
    <property type="entry name" value="UDG"/>
    <property type="match status" value="1"/>
</dbReference>
<dbReference type="InterPro" id="IPR002043">
    <property type="entry name" value="UDG_fam1"/>
</dbReference>
<dbReference type="InterPro" id="IPR018085">
    <property type="entry name" value="Ura-DNA_Glyclase_AS"/>
</dbReference>
<dbReference type="InterPro" id="IPR005122">
    <property type="entry name" value="Uracil-DNA_glycosylase-like"/>
</dbReference>
<dbReference type="InterPro" id="IPR036895">
    <property type="entry name" value="Uracil-DNA_glycosylase-like_sf"/>
</dbReference>
<dbReference type="NCBIfam" id="NF003588">
    <property type="entry name" value="PRK05254.1-1"/>
    <property type="match status" value="1"/>
</dbReference>
<dbReference type="NCBIfam" id="NF003589">
    <property type="entry name" value="PRK05254.1-2"/>
    <property type="match status" value="1"/>
</dbReference>
<dbReference type="NCBIfam" id="NF003592">
    <property type="entry name" value="PRK05254.1-5"/>
    <property type="match status" value="1"/>
</dbReference>
<dbReference type="NCBIfam" id="TIGR00628">
    <property type="entry name" value="ung"/>
    <property type="match status" value="1"/>
</dbReference>
<dbReference type="PANTHER" id="PTHR11264">
    <property type="entry name" value="URACIL-DNA GLYCOSYLASE"/>
    <property type="match status" value="1"/>
</dbReference>
<dbReference type="PANTHER" id="PTHR11264:SF0">
    <property type="entry name" value="URACIL-DNA GLYCOSYLASE"/>
    <property type="match status" value="1"/>
</dbReference>
<dbReference type="Pfam" id="PF03167">
    <property type="entry name" value="UDG"/>
    <property type="match status" value="1"/>
</dbReference>
<dbReference type="SMART" id="SM00986">
    <property type="entry name" value="UDG"/>
    <property type="match status" value="1"/>
</dbReference>
<dbReference type="SMART" id="SM00987">
    <property type="entry name" value="UreE_C"/>
    <property type="match status" value="1"/>
</dbReference>
<dbReference type="SUPFAM" id="SSF52141">
    <property type="entry name" value="Uracil-DNA glycosylase-like"/>
    <property type="match status" value="1"/>
</dbReference>
<dbReference type="PROSITE" id="PS00130">
    <property type="entry name" value="U_DNA_GLYCOSYLASE"/>
    <property type="match status" value="1"/>
</dbReference>
<keyword id="KW-0963">Cytoplasm</keyword>
<keyword id="KW-0227">DNA damage</keyword>
<keyword id="KW-0234">DNA repair</keyword>
<keyword id="KW-0378">Hydrolase</keyword>
<keyword id="KW-1185">Reference proteome</keyword>
<sequence>MAKELIGNDWDQILNPIFTSDKYHELHNFLKKEYSTRQIYPDMYHIFTAFKLTPFNKTKVVILGQDPYHNPGQANGMSFSVMPGAQLPPSLRNIYKELYDDVGAIPVNHGYLKKWADQGVLLLNAVLTVPYGHANGHQGKGWEDVTDAAIKALSKRGKVVFILWGRFAQNKIPLIDQSKNFIIKSSHPSPFSADRGFFGSRPFSRCNTALINFGETPIDWQLPEKVSKSDLI</sequence>
<accession>Q5FL46</accession>
<evidence type="ECO:0000255" key="1">
    <source>
        <dbReference type="HAMAP-Rule" id="MF_00148"/>
    </source>
</evidence>